<comment type="subcellular location">
    <subcellularLocation>
        <location evidence="2">Virion</location>
    </subcellularLocation>
</comment>
<comment type="similarity">
    <text evidence="3">Belongs to the atadenoviridae p32K protein family.</text>
</comment>
<name>P32K_ADEO7</name>
<evidence type="ECO:0000256" key="1">
    <source>
        <dbReference type="SAM" id="MobiDB-lite"/>
    </source>
</evidence>
<evidence type="ECO:0000269" key="2">
    <source>
    </source>
</evidence>
<evidence type="ECO:0000305" key="3"/>
<accession>P89028</accession>
<organism>
    <name type="scientific">Ovine adenovirus D serotype 7 (isolate OAV287)</name>
    <name type="common">OAdV-7</name>
    <name type="synonym">Ovine adenovirus 7</name>
    <dbReference type="NCBI Taxonomy" id="114430"/>
    <lineage>
        <taxon>Viruses</taxon>
        <taxon>Varidnaviria</taxon>
        <taxon>Bamfordvirae</taxon>
        <taxon>Preplasmiviricota</taxon>
        <taxon>Tectiliviricetes</taxon>
        <taxon>Rowavirales</taxon>
        <taxon>Adenoviridae</taxon>
        <taxon>Atadenovirus</taxon>
        <taxon>Ovine adenovirus D</taxon>
    </lineage>
</organism>
<organismHost>
    <name type="scientific">Ovis aries</name>
    <name type="common">Sheep</name>
    <dbReference type="NCBI Taxonomy" id="9940"/>
</organismHost>
<dbReference type="EMBL" id="U40839">
    <property type="protein sequence ID" value="AAB19237.2"/>
    <property type="molecule type" value="Genomic_DNA"/>
</dbReference>
<dbReference type="RefSeq" id="NP_659510.1">
    <property type="nucleotide sequence ID" value="NC_004037.2"/>
</dbReference>
<dbReference type="SMR" id="P89028"/>
<dbReference type="GeneID" id="949190"/>
<dbReference type="KEGG" id="vg:949190"/>
<dbReference type="OrthoDB" id="23094at10239"/>
<dbReference type="Proteomes" id="UP000008089">
    <property type="component" value="Genome"/>
</dbReference>
<dbReference type="GO" id="GO:0044423">
    <property type="term" value="C:virion component"/>
    <property type="evidence" value="ECO:0007669"/>
    <property type="project" value="UniProtKB-KW"/>
</dbReference>
<proteinExistence type="inferred from homology"/>
<reference key="1">
    <citation type="journal article" date="1996" name="Virology">
        <title>Unique genome arrangement of an ovine adenovirus: identification of new proteins and proteinase cleavage sites.</title>
        <authorList>
            <person name="Vrati S."/>
            <person name="Brookes D.E."/>
            <person name="Strike P."/>
            <person name="Khatri A."/>
            <person name="Boyle D.B."/>
            <person name="Both G.W."/>
        </authorList>
    </citation>
    <scope>NUCLEOTIDE SEQUENCE [GENOMIC DNA]</scope>
</reference>
<reference key="2">
    <citation type="journal article" date="2008" name="J. Virol.">
        <title>Cryoelectron microscopy map of Atadenovirus reveals cross-genus structural differences from human adenovirus.</title>
        <authorList>
            <person name="Pantelic R.S."/>
            <person name="Lockett L.J."/>
            <person name="Rothnagel R."/>
            <person name="Hankamer B."/>
            <person name="Both G.W."/>
        </authorList>
    </citation>
    <scope>SUBCELLULAR LOCATION</scope>
</reference>
<sequence>MYVTNNTALAGGAYRKRKKKFQRPKPRKRARKSKKPPKSENTYVQRFWKNPPRNYILKEPTKPISSYARWIPPEIVDVNNITVNIPNTITASRLPKTEFQETEVFKDARDQWYFPIRPSDGEHDTDVKVKKKWSLDTVLQFLQSSPKHIRQLLLTSLFGSLLGLILDTLFGGPWNLTSRLLRLIISVVPGGRILLTALDGLGYFLGNSANPIHLIENPMMQAFGNSIQKQISPRLAEDIIKAADEQIGGGFMRTIASILSAAASAGTHFTMALPAIPIAAVRPFMR</sequence>
<feature type="propeptide" id="PRO_0000441103" description="Removed in mature form" evidence="3">
    <location>
        <begin position="1"/>
        <end position="12"/>
    </location>
</feature>
<feature type="chain" id="PRO_5000144797" description="Structural protein p32K">
    <location>
        <begin position="13"/>
        <end position="286"/>
    </location>
</feature>
<feature type="region of interest" description="Disordered" evidence="1">
    <location>
        <begin position="1"/>
        <end position="41"/>
    </location>
</feature>
<feature type="compositionally biased region" description="Basic residues" evidence="1">
    <location>
        <begin position="14"/>
        <end position="36"/>
    </location>
</feature>
<protein>
    <recommendedName>
        <fullName>Structural protein p32K</fullName>
    </recommendedName>
</protein>
<keyword id="KW-1185">Reference proteome</keyword>
<keyword id="KW-0946">Virion</keyword>